<protein>
    <recommendedName>
        <fullName>Structural protein 1</fullName>
    </recommendedName>
    <alternativeName>
        <fullName>Structural ORF1 protein</fullName>
    </alternativeName>
</protein>
<accession>P09266</accession>
<evidence type="ECO:0000250" key="1"/>
<evidence type="ECO:0000255" key="2"/>
<evidence type="ECO:0000256" key="3">
    <source>
        <dbReference type="SAM" id="MobiDB-lite"/>
    </source>
</evidence>
<evidence type="ECO:0000305" key="4"/>
<organism>
    <name type="scientific">Varicella-zoster virus (strain Dumas)</name>
    <name type="common">HHV-3</name>
    <name type="synonym">Human herpesvirus 3</name>
    <dbReference type="NCBI Taxonomy" id="10338"/>
    <lineage>
        <taxon>Viruses</taxon>
        <taxon>Duplodnaviria</taxon>
        <taxon>Heunggongvirae</taxon>
        <taxon>Peploviricota</taxon>
        <taxon>Herviviricetes</taxon>
        <taxon>Herpesvirales</taxon>
        <taxon>Orthoherpesviridae</taxon>
        <taxon>Alphaherpesvirinae</taxon>
        <taxon>Varicellovirus</taxon>
        <taxon>Varicellovirus humanalpha3</taxon>
        <taxon>Human herpesvirus 3</taxon>
    </lineage>
</organism>
<proteinExistence type="inferred from homology"/>
<dbReference type="EMBL" id="X04370">
    <property type="protein sequence ID" value="CAA27884.1"/>
    <property type="molecule type" value="Genomic_DNA"/>
</dbReference>
<dbReference type="PIR" id="A27212">
    <property type="entry name" value="WZBE1"/>
</dbReference>
<dbReference type="SMR" id="P09266"/>
<dbReference type="Proteomes" id="UP000002602">
    <property type="component" value="Genome"/>
</dbReference>
<dbReference type="GO" id="GO:0044178">
    <property type="term" value="C:host cell Golgi membrane"/>
    <property type="evidence" value="ECO:0007669"/>
    <property type="project" value="UniProtKB-SubCell"/>
</dbReference>
<dbReference type="GO" id="GO:0016020">
    <property type="term" value="C:membrane"/>
    <property type="evidence" value="ECO:0007669"/>
    <property type="project" value="UniProtKB-KW"/>
</dbReference>
<dbReference type="GO" id="GO:0055036">
    <property type="term" value="C:virion membrane"/>
    <property type="evidence" value="ECO:0007669"/>
    <property type="project" value="UniProtKB-SubCell"/>
</dbReference>
<name>ORF1_VZVD</name>
<comment type="subunit">
    <text evidence="1">Homodimer.</text>
</comment>
<comment type="subcellular location">
    <subcellularLocation>
        <location evidence="1">Virion membrane</location>
        <topology evidence="1">Single-pass type II membrane protein</topology>
    </subcellularLocation>
    <subcellularLocation>
        <location evidence="1">Host Golgi apparatus membrane</location>
        <topology evidence="1">Single-pass type II membrane protein</topology>
    </subcellularLocation>
</comment>
<comment type="PTM">
    <text evidence="1">Phosphorylated.</text>
</comment>
<comment type="similarity">
    <text evidence="4">Belongs to the varicellovirus ORF1 protein family.</text>
</comment>
<feature type="chain" id="PRO_0000116157" description="Structural protein 1">
    <location>
        <begin position="1"/>
        <end position="108"/>
    </location>
</feature>
<feature type="topological domain" description="Intravirion" evidence="1">
    <location>
        <begin position="1"/>
        <end position="77"/>
    </location>
</feature>
<feature type="transmembrane region" description="Helical; Signal-anchor for type II membrane protein" evidence="2">
    <location>
        <begin position="78"/>
        <end position="98"/>
    </location>
</feature>
<feature type="topological domain" description="Virion surface" evidence="1">
    <location>
        <begin position="99"/>
        <end position="108"/>
    </location>
</feature>
<feature type="region of interest" description="Disordered" evidence="3">
    <location>
        <begin position="1"/>
        <end position="20"/>
    </location>
</feature>
<gene>
    <name type="ORF">ORF1</name>
</gene>
<organismHost>
    <name type="scientific">Homo sapiens</name>
    <name type="common">Human</name>
    <dbReference type="NCBI Taxonomy" id="9606"/>
</organismHost>
<reference key="1">
    <citation type="journal article" date="1986" name="J. Gen. Virol.">
        <title>The complete DNA sequence of varicella-zoster virus.</title>
        <authorList>
            <person name="Davison A.J."/>
            <person name="Scott J.E."/>
        </authorList>
    </citation>
    <scope>NUCLEOTIDE SEQUENCE [LARGE SCALE GENOMIC DNA]</scope>
</reference>
<sequence>MSRVSEYGVPEGVRESDSDTDSVFMYQHTELMQNNASPLVVQTRPPAVLIPLVDVPRPRSRRKASAQLKMQMDRLCNVLGVVLQMATLALVTYIAFVVHTRATSCKRE</sequence>
<keyword id="KW-1040">Host Golgi apparatus</keyword>
<keyword id="KW-1043">Host membrane</keyword>
<keyword id="KW-0472">Membrane</keyword>
<keyword id="KW-0597">Phosphoprotein</keyword>
<keyword id="KW-1185">Reference proteome</keyword>
<keyword id="KW-0735">Signal-anchor</keyword>
<keyword id="KW-0812">Transmembrane</keyword>
<keyword id="KW-1133">Transmembrane helix</keyword>
<keyword id="KW-0946">Virion</keyword>